<evidence type="ECO:0000305" key="1"/>
<evidence type="ECO:0000312" key="2">
    <source>
        <dbReference type="HGNC" id="HGNC:44666"/>
    </source>
</evidence>
<protein>
    <recommendedName>
        <fullName evidence="2">Ciliary microtubule inner protein 7</fullName>
    </recommendedName>
</protein>
<comment type="subcellular location">
    <subcellularLocation>
        <location evidence="1">Cell projection</location>
        <location evidence="1">Cilium</location>
    </subcellularLocation>
</comment>
<name>CMIP7_HUMAN</name>
<dbReference type="EMBL" id="AC135506">
    <property type="status" value="NOT_ANNOTATED_CDS"/>
    <property type="molecule type" value="Genomic_DNA"/>
</dbReference>
<dbReference type="EMBL" id="DN831818">
    <property type="status" value="NOT_ANNOTATED_CDS"/>
    <property type="molecule type" value="mRNA"/>
</dbReference>
<dbReference type="CCDS" id="CCDS58831.1"/>
<dbReference type="RefSeq" id="NP_001073997.2">
    <property type="nucleotide sequence ID" value="NM_001080528.3"/>
</dbReference>
<dbReference type="STRING" id="9606.ENSP00000454903"/>
<dbReference type="GlyGen" id="H3BNL1">
    <property type="glycosylation" value="1 site, 1 N-linked glycan (1 site)"/>
</dbReference>
<dbReference type="BioMuta" id="C3orf84"/>
<dbReference type="MassIVE" id="H3BNL1"/>
<dbReference type="PaxDb" id="9606-ENSP00000454903"/>
<dbReference type="PeptideAtlas" id="H3BNL1"/>
<dbReference type="DNASU" id="646498"/>
<dbReference type="Ensembl" id="ENST00000545770.7">
    <property type="protein sequence ID" value="ENSP00000454903.1"/>
    <property type="gene ID" value="ENSG00000236980.10"/>
</dbReference>
<dbReference type="GeneID" id="646498"/>
<dbReference type="KEGG" id="hsa:646498"/>
<dbReference type="MANE-Select" id="ENST00000545770.7">
    <property type="protein sequence ID" value="ENSP00000454903.1"/>
    <property type="RefSeq nucleotide sequence ID" value="NM_001080528.3"/>
    <property type="RefSeq protein sequence ID" value="NP_001073997.2"/>
</dbReference>
<dbReference type="UCSC" id="uc021wxt.2">
    <property type="organism name" value="human"/>
</dbReference>
<dbReference type="AGR" id="HGNC:44666"/>
<dbReference type="CTD" id="646498"/>
<dbReference type="DisGeNET" id="646498"/>
<dbReference type="GeneCards" id="CIMIP7"/>
<dbReference type="HGNC" id="HGNC:44666">
    <property type="gene designation" value="CIMIP7"/>
</dbReference>
<dbReference type="HPA" id="ENSG00000236980">
    <property type="expression patterns" value="Tissue enriched (testis)"/>
</dbReference>
<dbReference type="neXtProt" id="NX_H3BNL1"/>
<dbReference type="OpenTargets" id="ENSG00000236980"/>
<dbReference type="VEuPathDB" id="HostDB:ENSG00000236980"/>
<dbReference type="eggNOG" id="ENOG502S51K">
    <property type="taxonomic scope" value="Eukaryota"/>
</dbReference>
<dbReference type="GeneTree" id="ENSGT00390000002177"/>
<dbReference type="InParanoid" id="H3BNL1"/>
<dbReference type="OrthoDB" id="10045229at2759"/>
<dbReference type="PAN-GO" id="H3BNL1">
    <property type="GO annotations" value="0 GO annotations based on evolutionary models"/>
</dbReference>
<dbReference type="TreeFam" id="TF338847"/>
<dbReference type="PathwayCommons" id="H3BNL1"/>
<dbReference type="BioGRID-ORCS" id="646498">
    <property type="hits" value="7 hits in 1069 CRISPR screens"/>
</dbReference>
<dbReference type="GenomeRNAi" id="646498"/>
<dbReference type="Pharos" id="H3BNL1">
    <property type="development level" value="Tdark"/>
</dbReference>
<dbReference type="PRO" id="PR:H3BNL1"/>
<dbReference type="Proteomes" id="UP000005640">
    <property type="component" value="Chromosome 3"/>
</dbReference>
<dbReference type="RNAct" id="H3BNL1">
    <property type="molecule type" value="protein"/>
</dbReference>
<dbReference type="Bgee" id="ENSG00000236980">
    <property type="expression patterns" value="Expressed in male germ line stem cell (sensu Vertebrata) in testis and 19 other cell types or tissues"/>
</dbReference>
<dbReference type="ExpressionAtlas" id="H3BNL1">
    <property type="expression patterns" value="baseline and differential"/>
</dbReference>
<dbReference type="GO" id="GO:0005929">
    <property type="term" value="C:cilium"/>
    <property type="evidence" value="ECO:0007669"/>
    <property type="project" value="UniProtKB-SubCell"/>
</dbReference>
<dbReference type="InterPro" id="IPR029369">
    <property type="entry name" value="HDNR"/>
</dbReference>
<dbReference type="PANTHER" id="PTHR35539">
    <property type="entry name" value="CDNA SEQUENCE BC048562"/>
    <property type="match status" value="1"/>
</dbReference>
<dbReference type="PANTHER" id="PTHR35539:SF1">
    <property type="entry name" value="CDNA SEQUENCE BC048562"/>
    <property type="match status" value="1"/>
</dbReference>
<dbReference type="Pfam" id="PF15115">
    <property type="entry name" value="HDNR"/>
    <property type="match status" value="1"/>
</dbReference>
<proteinExistence type="evidence at transcript level"/>
<organism>
    <name type="scientific">Homo sapiens</name>
    <name type="common">Human</name>
    <dbReference type="NCBI Taxonomy" id="9606"/>
    <lineage>
        <taxon>Eukaryota</taxon>
        <taxon>Metazoa</taxon>
        <taxon>Chordata</taxon>
        <taxon>Craniata</taxon>
        <taxon>Vertebrata</taxon>
        <taxon>Euteleostomi</taxon>
        <taxon>Mammalia</taxon>
        <taxon>Eutheria</taxon>
        <taxon>Euarchontoglires</taxon>
        <taxon>Primates</taxon>
        <taxon>Haplorrhini</taxon>
        <taxon>Catarrhini</taxon>
        <taxon>Hominidae</taxon>
        <taxon>Homo</taxon>
    </lineage>
</organism>
<sequence>MQSALVGSWHNNGFYGHYRSQFKSESAREYHLAAKPQPPAVFLQRCQEPAQRHFFSKHDNRTSFDKGPYCLLQGIGRRKDLERLWQRHTFLRWAPCEIELRQQGPLESSYQADFRPGPGLSGLPQHLIHFVQVQPSHTRTTYQQNFCCPSQGGHYGSYKVGPQAPVTDVLPDLPGIPRPKLLQHYLHAGVSECLNWSRALNKDS</sequence>
<gene>
    <name evidence="2" type="primary">CIMIP7</name>
    <name type="synonym">C3orf84</name>
</gene>
<keyword id="KW-0966">Cell projection</keyword>
<keyword id="KW-1185">Reference proteome</keyword>
<accession>H3BNL1</accession>
<feature type="chain" id="PRO_0000423415" description="Ciliary microtubule inner protein 7">
    <location>
        <begin position="1"/>
        <end position="204"/>
    </location>
</feature>
<reference key="1">
    <citation type="journal article" date="2006" name="Nature">
        <title>The DNA sequence, annotation and analysis of human chromosome 3.</title>
        <authorList>
            <person name="Muzny D.M."/>
            <person name="Scherer S.E."/>
            <person name="Kaul R."/>
            <person name="Wang J."/>
            <person name="Yu J."/>
            <person name="Sudbrak R."/>
            <person name="Buhay C.J."/>
            <person name="Chen R."/>
            <person name="Cree A."/>
            <person name="Ding Y."/>
            <person name="Dugan-Rocha S."/>
            <person name="Gill R."/>
            <person name="Gunaratne P."/>
            <person name="Harris R.A."/>
            <person name="Hawes A.C."/>
            <person name="Hernandez J."/>
            <person name="Hodgson A.V."/>
            <person name="Hume J."/>
            <person name="Jackson A."/>
            <person name="Khan Z.M."/>
            <person name="Kovar-Smith C."/>
            <person name="Lewis L.R."/>
            <person name="Lozado R.J."/>
            <person name="Metzker M.L."/>
            <person name="Milosavljevic A."/>
            <person name="Miner G.R."/>
            <person name="Morgan M.B."/>
            <person name="Nazareth L.V."/>
            <person name="Scott G."/>
            <person name="Sodergren E."/>
            <person name="Song X.-Z."/>
            <person name="Steffen D."/>
            <person name="Wei S."/>
            <person name="Wheeler D.A."/>
            <person name="Wright M.W."/>
            <person name="Worley K.C."/>
            <person name="Yuan Y."/>
            <person name="Zhang Z."/>
            <person name="Adams C.Q."/>
            <person name="Ansari-Lari M.A."/>
            <person name="Ayele M."/>
            <person name="Brown M.J."/>
            <person name="Chen G."/>
            <person name="Chen Z."/>
            <person name="Clendenning J."/>
            <person name="Clerc-Blankenburg K.P."/>
            <person name="Chen R."/>
            <person name="Chen Z."/>
            <person name="Davis C."/>
            <person name="Delgado O."/>
            <person name="Dinh H.H."/>
            <person name="Dong W."/>
            <person name="Draper H."/>
            <person name="Ernst S."/>
            <person name="Fu G."/>
            <person name="Gonzalez-Garay M.L."/>
            <person name="Garcia D.K."/>
            <person name="Gillett W."/>
            <person name="Gu J."/>
            <person name="Hao B."/>
            <person name="Haugen E."/>
            <person name="Havlak P."/>
            <person name="He X."/>
            <person name="Hennig S."/>
            <person name="Hu S."/>
            <person name="Huang W."/>
            <person name="Jackson L.R."/>
            <person name="Jacob L.S."/>
            <person name="Kelly S.H."/>
            <person name="Kube M."/>
            <person name="Levy R."/>
            <person name="Li Z."/>
            <person name="Liu B."/>
            <person name="Liu J."/>
            <person name="Liu W."/>
            <person name="Lu J."/>
            <person name="Maheshwari M."/>
            <person name="Nguyen B.-V."/>
            <person name="Okwuonu G.O."/>
            <person name="Palmeiri A."/>
            <person name="Pasternak S."/>
            <person name="Perez L.M."/>
            <person name="Phelps K.A."/>
            <person name="Plopper F.J."/>
            <person name="Qiang B."/>
            <person name="Raymond C."/>
            <person name="Rodriguez R."/>
            <person name="Saenphimmachak C."/>
            <person name="Santibanez J."/>
            <person name="Shen H."/>
            <person name="Shen Y."/>
            <person name="Subramanian S."/>
            <person name="Tabor P.E."/>
            <person name="Verduzco D."/>
            <person name="Waldron L."/>
            <person name="Wang J."/>
            <person name="Wang J."/>
            <person name="Wang Q."/>
            <person name="Williams G.A."/>
            <person name="Wong G.K.-S."/>
            <person name="Yao Z."/>
            <person name="Zhang J."/>
            <person name="Zhang X."/>
            <person name="Zhao G."/>
            <person name="Zhou J."/>
            <person name="Zhou Y."/>
            <person name="Nelson D."/>
            <person name="Lehrach H."/>
            <person name="Reinhardt R."/>
            <person name="Naylor S.L."/>
            <person name="Yang H."/>
            <person name="Olson M."/>
            <person name="Weinstock G."/>
            <person name="Gibbs R.A."/>
        </authorList>
    </citation>
    <scope>NUCLEOTIDE SEQUENCE [LARGE SCALE GENOMIC DNA]</scope>
</reference>
<reference key="2">
    <citation type="submission" date="2005-04" db="EMBL/GenBank/DDBJ databases">
        <title>Exhaustive RT-PCR and sequencing of all novel TWINSCAN predictions in human.</title>
        <authorList>
            <person name="Stevens M."/>
            <person name="Wei C."/>
            <person name="Gross S.S."/>
            <person name="McPherson J."/>
            <person name="Brent M.R."/>
        </authorList>
    </citation>
    <scope>NUCLEOTIDE SEQUENCE [LARGE SCALE MRNA] OF 34-138</scope>
</reference>